<evidence type="ECO:0000255" key="1">
    <source>
        <dbReference type="HAMAP-Rule" id="MF_00376"/>
    </source>
</evidence>
<gene>
    <name evidence="1" type="primary">coaE</name>
    <name type="ordered locus">RHE_CH00004</name>
</gene>
<dbReference type="EC" id="2.7.1.24" evidence="1"/>
<dbReference type="EMBL" id="CP000133">
    <property type="protein sequence ID" value="ABC88838.1"/>
    <property type="molecule type" value="Genomic_DNA"/>
</dbReference>
<dbReference type="RefSeq" id="WP_011423410.1">
    <property type="nucleotide sequence ID" value="NC_007761.1"/>
</dbReference>
<dbReference type="SMR" id="Q2KE98"/>
<dbReference type="KEGG" id="ret:RHE_CH00004"/>
<dbReference type="eggNOG" id="COG0237">
    <property type="taxonomic scope" value="Bacteria"/>
</dbReference>
<dbReference type="HOGENOM" id="CLU_057180_3_0_5"/>
<dbReference type="OrthoDB" id="9812943at2"/>
<dbReference type="UniPathway" id="UPA00241">
    <property type="reaction ID" value="UER00356"/>
</dbReference>
<dbReference type="Proteomes" id="UP000001936">
    <property type="component" value="Chromosome"/>
</dbReference>
<dbReference type="GO" id="GO:0005737">
    <property type="term" value="C:cytoplasm"/>
    <property type="evidence" value="ECO:0007669"/>
    <property type="project" value="UniProtKB-SubCell"/>
</dbReference>
<dbReference type="GO" id="GO:0005524">
    <property type="term" value="F:ATP binding"/>
    <property type="evidence" value="ECO:0007669"/>
    <property type="project" value="UniProtKB-UniRule"/>
</dbReference>
<dbReference type="GO" id="GO:0004140">
    <property type="term" value="F:dephospho-CoA kinase activity"/>
    <property type="evidence" value="ECO:0007669"/>
    <property type="project" value="UniProtKB-UniRule"/>
</dbReference>
<dbReference type="GO" id="GO:0015937">
    <property type="term" value="P:coenzyme A biosynthetic process"/>
    <property type="evidence" value="ECO:0007669"/>
    <property type="project" value="UniProtKB-UniRule"/>
</dbReference>
<dbReference type="CDD" id="cd02022">
    <property type="entry name" value="DPCK"/>
    <property type="match status" value="1"/>
</dbReference>
<dbReference type="Gene3D" id="3.40.50.300">
    <property type="entry name" value="P-loop containing nucleotide triphosphate hydrolases"/>
    <property type="match status" value="1"/>
</dbReference>
<dbReference type="HAMAP" id="MF_00376">
    <property type="entry name" value="Dephospho_CoA_kinase"/>
    <property type="match status" value="1"/>
</dbReference>
<dbReference type="InterPro" id="IPR001977">
    <property type="entry name" value="Depp_CoAkinase"/>
</dbReference>
<dbReference type="InterPro" id="IPR027417">
    <property type="entry name" value="P-loop_NTPase"/>
</dbReference>
<dbReference type="NCBIfam" id="TIGR00152">
    <property type="entry name" value="dephospho-CoA kinase"/>
    <property type="match status" value="1"/>
</dbReference>
<dbReference type="PANTHER" id="PTHR10695:SF46">
    <property type="entry name" value="BIFUNCTIONAL COENZYME A SYNTHASE-RELATED"/>
    <property type="match status" value="1"/>
</dbReference>
<dbReference type="PANTHER" id="PTHR10695">
    <property type="entry name" value="DEPHOSPHO-COA KINASE-RELATED"/>
    <property type="match status" value="1"/>
</dbReference>
<dbReference type="Pfam" id="PF01121">
    <property type="entry name" value="CoaE"/>
    <property type="match status" value="1"/>
</dbReference>
<dbReference type="SUPFAM" id="SSF52540">
    <property type="entry name" value="P-loop containing nucleoside triphosphate hydrolases"/>
    <property type="match status" value="1"/>
</dbReference>
<dbReference type="PROSITE" id="PS51219">
    <property type="entry name" value="DPCK"/>
    <property type="match status" value="1"/>
</dbReference>
<name>COAE_RHIEC</name>
<protein>
    <recommendedName>
        <fullName evidence="1">Dephospho-CoA kinase</fullName>
        <ecNumber evidence="1">2.7.1.24</ecNumber>
    </recommendedName>
    <alternativeName>
        <fullName evidence="1">Dephosphocoenzyme A kinase</fullName>
    </alternativeName>
</protein>
<proteinExistence type="inferred from homology"/>
<feature type="chain" id="PRO_0000243326" description="Dephospho-CoA kinase">
    <location>
        <begin position="1"/>
        <end position="203"/>
    </location>
</feature>
<feature type="domain" description="DPCK" evidence="1">
    <location>
        <begin position="3"/>
        <end position="202"/>
    </location>
</feature>
<feature type="binding site" evidence="1">
    <location>
        <begin position="11"/>
        <end position="16"/>
    </location>
    <ligand>
        <name>ATP</name>
        <dbReference type="ChEBI" id="CHEBI:30616"/>
    </ligand>
</feature>
<accession>Q2KE98</accession>
<sequence length="203" mass="22511">MLKIGLTGSIGMGKSTVGKLFAEAGIPLNDSDAVVHNLYAGEAAPLVNAAFPGTMKDGAVDRHELGRQLALDPEGFKRLEAIVHPLVRKREMEFLAKQQADGAEMVLLDIPLLFETGAWERVDVIVVVSTDSQIQRQRVLAREDMTEEKFDMILSRQTPDAEKRRRADYLVDTSHSIAETRAQVLEIIAELKMRIAKGDFRNA</sequence>
<comment type="function">
    <text evidence="1">Catalyzes the phosphorylation of the 3'-hydroxyl group of dephosphocoenzyme A to form coenzyme A.</text>
</comment>
<comment type="catalytic activity">
    <reaction evidence="1">
        <text>3'-dephospho-CoA + ATP = ADP + CoA + H(+)</text>
        <dbReference type="Rhea" id="RHEA:18245"/>
        <dbReference type="ChEBI" id="CHEBI:15378"/>
        <dbReference type="ChEBI" id="CHEBI:30616"/>
        <dbReference type="ChEBI" id="CHEBI:57287"/>
        <dbReference type="ChEBI" id="CHEBI:57328"/>
        <dbReference type="ChEBI" id="CHEBI:456216"/>
        <dbReference type="EC" id="2.7.1.24"/>
    </reaction>
</comment>
<comment type="pathway">
    <text evidence="1">Cofactor biosynthesis; coenzyme A biosynthesis; CoA from (R)-pantothenate: step 5/5.</text>
</comment>
<comment type="subcellular location">
    <subcellularLocation>
        <location evidence="1">Cytoplasm</location>
    </subcellularLocation>
</comment>
<comment type="similarity">
    <text evidence="1">Belongs to the CoaE family.</text>
</comment>
<organism>
    <name type="scientific">Rhizobium etli (strain ATCC 51251 / DSM 11541 / JCM 21823 / NBRC 15573 / CFN 42)</name>
    <dbReference type="NCBI Taxonomy" id="347834"/>
    <lineage>
        <taxon>Bacteria</taxon>
        <taxon>Pseudomonadati</taxon>
        <taxon>Pseudomonadota</taxon>
        <taxon>Alphaproteobacteria</taxon>
        <taxon>Hyphomicrobiales</taxon>
        <taxon>Rhizobiaceae</taxon>
        <taxon>Rhizobium/Agrobacterium group</taxon>
        <taxon>Rhizobium</taxon>
    </lineage>
</organism>
<keyword id="KW-0067">ATP-binding</keyword>
<keyword id="KW-0173">Coenzyme A biosynthesis</keyword>
<keyword id="KW-0963">Cytoplasm</keyword>
<keyword id="KW-0418">Kinase</keyword>
<keyword id="KW-0547">Nucleotide-binding</keyword>
<keyword id="KW-1185">Reference proteome</keyword>
<keyword id="KW-0808">Transferase</keyword>
<reference key="1">
    <citation type="journal article" date="2006" name="Proc. Natl. Acad. Sci. U.S.A.">
        <title>The partitioned Rhizobium etli genome: genetic and metabolic redundancy in seven interacting replicons.</title>
        <authorList>
            <person name="Gonzalez V."/>
            <person name="Santamaria R.I."/>
            <person name="Bustos P."/>
            <person name="Hernandez-Gonzalez I."/>
            <person name="Medrano-Soto A."/>
            <person name="Moreno-Hagelsieb G."/>
            <person name="Janga S.C."/>
            <person name="Ramirez M.A."/>
            <person name="Jimenez-Jacinto V."/>
            <person name="Collado-Vides J."/>
            <person name="Davila G."/>
        </authorList>
    </citation>
    <scope>NUCLEOTIDE SEQUENCE [LARGE SCALE GENOMIC DNA]</scope>
    <source>
        <strain>ATCC 51251 / DSM 11541 / JCM 21823 / NBRC 15573 / CFN 42</strain>
    </source>
</reference>